<sequence length="228" mass="27210">MQLCSWNLRGSEQRFHPTTSCVDYYLRIEFKKLFELCKIMKNMKTKMVRLGTYVSQDAYKLLRELTELYGNQSNVLDQAIRLLYDVSKYGSKADRILIREKLINEFENILISKKNFMHLLEGKKEGLFDEDVITAVILSFVDESMDSKSFFPKMMDALKKIYVEGNRWFTNIEYKETESGYKVTFYHNLNSEFSDFASEYFRRFFKIGYKIVEEQKLNKLFILQVSEF</sequence>
<protein>
    <recommendedName>
        <fullName>Uncharacterized protein AF_1201</fullName>
    </recommendedName>
</protein>
<reference key="1">
    <citation type="journal article" date="1997" name="Nature">
        <title>The complete genome sequence of the hyperthermophilic, sulphate-reducing archaeon Archaeoglobus fulgidus.</title>
        <authorList>
            <person name="Klenk H.-P."/>
            <person name="Clayton R.A."/>
            <person name="Tomb J.-F."/>
            <person name="White O."/>
            <person name="Nelson K.E."/>
            <person name="Ketchum K.A."/>
            <person name="Dodson R.J."/>
            <person name="Gwinn M.L."/>
            <person name="Hickey E.K."/>
            <person name="Peterson J.D."/>
            <person name="Richardson D.L."/>
            <person name="Kerlavage A.R."/>
            <person name="Graham D.E."/>
            <person name="Kyrpides N.C."/>
            <person name="Fleischmann R.D."/>
            <person name="Quackenbush J."/>
            <person name="Lee N.H."/>
            <person name="Sutton G.G."/>
            <person name="Gill S.R."/>
            <person name="Kirkness E.F."/>
            <person name="Dougherty B.A."/>
            <person name="McKenney K."/>
            <person name="Adams M.D."/>
            <person name="Loftus B.J."/>
            <person name="Peterson S.N."/>
            <person name="Reich C.I."/>
            <person name="McNeil L.K."/>
            <person name="Badger J.H."/>
            <person name="Glodek A."/>
            <person name="Zhou L."/>
            <person name="Overbeek R."/>
            <person name="Gocayne J.D."/>
            <person name="Weidman J.F."/>
            <person name="McDonald L.A."/>
            <person name="Utterback T.R."/>
            <person name="Cotton M.D."/>
            <person name="Spriggs T."/>
            <person name="Artiach P."/>
            <person name="Kaine B.P."/>
            <person name="Sykes S.M."/>
            <person name="Sadow P.W."/>
            <person name="D'Andrea K.P."/>
            <person name="Bowman C."/>
            <person name="Fujii C."/>
            <person name="Garland S.A."/>
            <person name="Mason T.M."/>
            <person name="Olsen G.J."/>
            <person name="Fraser C.M."/>
            <person name="Smith H.O."/>
            <person name="Woese C.R."/>
            <person name="Venter J.C."/>
        </authorList>
    </citation>
    <scope>NUCLEOTIDE SEQUENCE [LARGE SCALE GENOMIC DNA]</scope>
    <source>
        <strain>ATCC 49558 / DSM 4304 / JCM 9628 / NBRC 100126 / VC-16</strain>
    </source>
</reference>
<proteinExistence type="predicted"/>
<feature type="chain" id="PRO_0000127970" description="Uncharacterized protein AF_1201">
    <location>
        <begin position="1"/>
        <end position="228"/>
    </location>
</feature>
<dbReference type="EMBL" id="AE000782">
    <property type="protein sequence ID" value="AAB90048.1"/>
    <property type="molecule type" value="Genomic_DNA"/>
</dbReference>
<dbReference type="PIR" id="H69399">
    <property type="entry name" value="H69399"/>
</dbReference>
<dbReference type="SMR" id="O29067"/>
<dbReference type="STRING" id="224325.AF_1201"/>
<dbReference type="PaxDb" id="224325-AF_1201"/>
<dbReference type="EnsemblBacteria" id="AAB90048">
    <property type="protein sequence ID" value="AAB90048"/>
    <property type="gene ID" value="AF_1201"/>
</dbReference>
<dbReference type="KEGG" id="afu:AF_1201"/>
<dbReference type="eggNOG" id="arCOG06817">
    <property type="taxonomic scope" value="Archaea"/>
</dbReference>
<dbReference type="HOGENOM" id="CLU_1212566_0_0_2"/>
<dbReference type="Proteomes" id="UP000002199">
    <property type="component" value="Chromosome"/>
</dbReference>
<name>Y1201_ARCFU</name>
<gene>
    <name type="ordered locus">AF_1201</name>
</gene>
<keyword id="KW-1185">Reference proteome</keyword>
<organism>
    <name type="scientific">Archaeoglobus fulgidus (strain ATCC 49558 / DSM 4304 / JCM 9628 / NBRC 100126 / VC-16)</name>
    <dbReference type="NCBI Taxonomy" id="224325"/>
    <lineage>
        <taxon>Archaea</taxon>
        <taxon>Methanobacteriati</taxon>
        <taxon>Methanobacteriota</taxon>
        <taxon>Archaeoglobi</taxon>
        <taxon>Archaeoglobales</taxon>
        <taxon>Archaeoglobaceae</taxon>
        <taxon>Archaeoglobus</taxon>
    </lineage>
</organism>
<accession>O29067</accession>